<protein>
    <recommendedName>
        <fullName evidence="1">Flagellar protein FliT</fullName>
    </recommendedName>
</protein>
<evidence type="ECO:0000255" key="1">
    <source>
        <dbReference type="HAMAP-Rule" id="MF_01180"/>
    </source>
</evidence>
<keyword id="KW-1005">Bacterial flagellum biogenesis</keyword>
<keyword id="KW-0143">Chaperone</keyword>
<keyword id="KW-0963">Cytoplasm</keyword>
<keyword id="KW-0678">Repressor</keyword>
<keyword id="KW-0804">Transcription</keyword>
<keyword id="KW-0805">Transcription regulation</keyword>
<sequence>MNNAPHLYFAWQQLVEKSQLMLRLATEEQWDELIASEMAYVNAVQEIAHLTEEVAPSTTMQEQLRPMLHLILDNESKVKQLLQIRMDELAKLVGQSSVQKSVLSAYGDQGGFVLAPQDNLF</sequence>
<name>FLIT_SHIF8</name>
<accession>Q0T3K1</accession>
<gene>
    <name evidence="1" type="primary">fliT</name>
    <name type="ordered locus">SFV_1970</name>
</gene>
<proteinExistence type="inferred from homology"/>
<dbReference type="EMBL" id="CP000266">
    <property type="protein sequence ID" value="ABF04114.1"/>
    <property type="molecule type" value="Genomic_DNA"/>
</dbReference>
<dbReference type="RefSeq" id="WP_001057836.1">
    <property type="nucleotide sequence ID" value="NC_008258.1"/>
</dbReference>
<dbReference type="SMR" id="Q0T3K1"/>
<dbReference type="KEGG" id="sfv:SFV_1970"/>
<dbReference type="HOGENOM" id="CLU_155793_1_1_6"/>
<dbReference type="Proteomes" id="UP000000659">
    <property type="component" value="Chromosome"/>
</dbReference>
<dbReference type="GO" id="GO:0005829">
    <property type="term" value="C:cytosol"/>
    <property type="evidence" value="ECO:0007669"/>
    <property type="project" value="UniProtKB-SubCell"/>
</dbReference>
<dbReference type="GO" id="GO:0044781">
    <property type="term" value="P:bacterial-type flagellum organization"/>
    <property type="evidence" value="ECO:0007669"/>
    <property type="project" value="UniProtKB-KW"/>
</dbReference>
<dbReference type="GO" id="GO:1902209">
    <property type="term" value="P:negative regulation of bacterial-type flagellum assembly"/>
    <property type="evidence" value="ECO:0007669"/>
    <property type="project" value="UniProtKB-UniRule"/>
</dbReference>
<dbReference type="GO" id="GO:0006457">
    <property type="term" value="P:protein folding"/>
    <property type="evidence" value="ECO:0007669"/>
    <property type="project" value="UniProtKB-UniRule"/>
</dbReference>
<dbReference type="FunFam" id="1.20.58.380:FF:000001">
    <property type="entry name" value="Flagellar protein FliT"/>
    <property type="match status" value="1"/>
</dbReference>
<dbReference type="Gene3D" id="1.20.58.380">
    <property type="entry name" value="Flagellar protein flit"/>
    <property type="match status" value="1"/>
</dbReference>
<dbReference type="HAMAP" id="MF_01180">
    <property type="entry name" value="FliT"/>
    <property type="match status" value="1"/>
</dbReference>
<dbReference type="InterPro" id="IPR008622">
    <property type="entry name" value="FliT"/>
</dbReference>
<dbReference type="NCBIfam" id="NF007836">
    <property type="entry name" value="PRK10548.1"/>
    <property type="match status" value="1"/>
</dbReference>
<dbReference type="Pfam" id="PF05400">
    <property type="entry name" value="FliT"/>
    <property type="match status" value="1"/>
</dbReference>
<feature type="chain" id="PRO_0000353893" description="Flagellar protein FliT">
    <location>
        <begin position="1"/>
        <end position="121"/>
    </location>
</feature>
<feature type="region of interest" description="Required for homodimerization" evidence="1">
    <location>
        <begin position="1"/>
        <end position="50"/>
    </location>
</feature>
<feature type="region of interest" description="FliD binding" evidence="1">
    <location>
        <begin position="60"/>
        <end position="98"/>
    </location>
</feature>
<comment type="function">
    <text evidence="1">Dual-function protein that regulates the transcription of class 2 flagellar operons and that also acts as an export chaperone for the filament-capping protein FliD. As a transcriptional regulator, acts as an anti-FlhDC factor; it directly binds FlhC, thus inhibiting the binding of the FlhC/FlhD complex to class 2 promoters, resulting in decreased expression of class 2 flagellar operons. As a chaperone, effects FliD transition to the membrane by preventing its premature polymerization, and by directing it to the export apparatus.</text>
</comment>
<comment type="subunit">
    <text evidence="1">Homodimer. Interacts with FliD and FlhC.</text>
</comment>
<comment type="subcellular location">
    <subcellularLocation>
        <location evidence="1">Cytoplasm</location>
        <location evidence="1">Cytosol</location>
    </subcellularLocation>
</comment>
<comment type="similarity">
    <text evidence="1">Belongs to the FliT family.</text>
</comment>
<reference key="1">
    <citation type="journal article" date="2006" name="BMC Genomics">
        <title>Complete genome sequence of Shigella flexneri 5b and comparison with Shigella flexneri 2a.</title>
        <authorList>
            <person name="Nie H."/>
            <person name="Yang F."/>
            <person name="Zhang X."/>
            <person name="Yang J."/>
            <person name="Chen L."/>
            <person name="Wang J."/>
            <person name="Xiong Z."/>
            <person name="Peng J."/>
            <person name="Sun L."/>
            <person name="Dong J."/>
            <person name="Xue Y."/>
            <person name="Xu X."/>
            <person name="Chen S."/>
            <person name="Yao Z."/>
            <person name="Shen Y."/>
            <person name="Jin Q."/>
        </authorList>
    </citation>
    <scope>NUCLEOTIDE SEQUENCE [LARGE SCALE GENOMIC DNA]</scope>
    <source>
        <strain>8401</strain>
    </source>
</reference>
<organism>
    <name type="scientific">Shigella flexneri serotype 5b (strain 8401)</name>
    <dbReference type="NCBI Taxonomy" id="373384"/>
    <lineage>
        <taxon>Bacteria</taxon>
        <taxon>Pseudomonadati</taxon>
        <taxon>Pseudomonadota</taxon>
        <taxon>Gammaproteobacteria</taxon>
        <taxon>Enterobacterales</taxon>
        <taxon>Enterobacteriaceae</taxon>
        <taxon>Shigella</taxon>
    </lineage>
</organism>